<gene>
    <name evidence="1" type="primary">ftsZ</name>
    <name type="ordered locus">PP_1342</name>
</gene>
<sequence>MFELVDNVPQSPVIKVIGVGGGGGNAVNHMVKSSIEGVEFICANTDAQALKNIGARTILQLGTGVTKGLGAGANPEVGRQAALEDRERIAEVLQGTNMVFITTGMGGGTGTGAAPIIAEVAKEMGILTVAVVTRPFPFEGRKRMQIADEGIRMLAESVDSLITIPNEKLLTILGKDASLLSAFAKADDVLAGAVRGISDIIKRPGMINVDFADVRTVMGEMGMAMMGTGCASGPNRAREATEAAIRNPLLEDVNLQGARGILVNITAGPDLSLGEYSDVGSIIEAFASDHAMVKVGTVIDPDMRDELHVTVVATGLGARIEKPVKVVDNTLQTAQQAYEASNPAPVRQEQPAVNYRDLERPTVMRNQAHAGAAAAAKLNPQDDLDYLDIPAFLRRQAD</sequence>
<organism>
    <name type="scientific">Pseudomonas putida (strain ATCC 47054 / DSM 6125 / CFBP 8728 / NCIMB 11950 / KT2440)</name>
    <dbReference type="NCBI Taxonomy" id="160488"/>
    <lineage>
        <taxon>Bacteria</taxon>
        <taxon>Pseudomonadati</taxon>
        <taxon>Pseudomonadota</taxon>
        <taxon>Gammaproteobacteria</taxon>
        <taxon>Pseudomonadales</taxon>
        <taxon>Pseudomonadaceae</taxon>
        <taxon>Pseudomonas</taxon>
    </lineage>
</organism>
<feature type="chain" id="PRO_0000114372" description="Cell division protein FtsZ">
    <location>
        <begin position="1"/>
        <end position="398"/>
    </location>
</feature>
<feature type="binding site" evidence="1">
    <location>
        <begin position="21"/>
        <end position="25"/>
    </location>
    <ligand>
        <name>GTP</name>
        <dbReference type="ChEBI" id="CHEBI:37565"/>
    </ligand>
</feature>
<feature type="binding site" evidence="1">
    <location>
        <begin position="108"/>
        <end position="110"/>
    </location>
    <ligand>
        <name>GTP</name>
        <dbReference type="ChEBI" id="CHEBI:37565"/>
    </ligand>
</feature>
<feature type="binding site" evidence="1">
    <location>
        <position position="139"/>
    </location>
    <ligand>
        <name>GTP</name>
        <dbReference type="ChEBI" id="CHEBI:37565"/>
    </ligand>
</feature>
<feature type="binding site" evidence="1">
    <location>
        <position position="143"/>
    </location>
    <ligand>
        <name>GTP</name>
        <dbReference type="ChEBI" id="CHEBI:37565"/>
    </ligand>
</feature>
<feature type="binding site" evidence="1">
    <location>
        <position position="187"/>
    </location>
    <ligand>
        <name>GTP</name>
        <dbReference type="ChEBI" id="CHEBI:37565"/>
    </ligand>
</feature>
<feature type="sequence conflict" description="In Ref. 1; AAC24467." evidence="2" ref="1">
    <original>G</original>
    <variation>R</variation>
    <location>
        <position position="233"/>
    </location>
</feature>
<feature type="sequence conflict" description="In Ref. 1; AAC24467." evidence="2" ref="1">
    <original>APVR</original>
    <variation>QSCAGA</variation>
    <location>
        <begin position="344"/>
        <end position="347"/>
    </location>
</feature>
<evidence type="ECO:0000255" key="1">
    <source>
        <dbReference type="HAMAP-Rule" id="MF_00909"/>
    </source>
</evidence>
<evidence type="ECO:0000305" key="2"/>
<comment type="function">
    <text evidence="1">Essential cell division protein that forms a contractile ring structure (Z ring) at the future cell division site. The regulation of the ring assembly controls the timing and the location of cell division. One of the functions of the FtsZ ring is to recruit other cell division proteins to the septum to produce a new cell wall between the dividing cells. Binds GTP and shows GTPase activity.</text>
</comment>
<comment type="subunit">
    <text evidence="1">Homodimer. Polymerizes to form a dynamic ring structure in a strictly GTP-dependent manner. Interacts directly with several other division proteins.</text>
</comment>
<comment type="subcellular location">
    <subcellularLocation>
        <location evidence="1">Cytoplasm</location>
    </subcellularLocation>
    <text evidence="1">Assembles at midcell at the inner surface of the cytoplasmic membrane.</text>
</comment>
<comment type="similarity">
    <text evidence="1">Belongs to the FtsZ family.</text>
</comment>
<name>FTSZ_PSEPK</name>
<protein>
    <recommendedName>
        <fullName evidence="1">Cell division protein FtsZ</fullName>
    </recommendedName>
</protein>
<keyword id="KW-0131">Cell cycle</keyword>
<keyword id="KW-0132">Cell division</keyword>
<keyword id="KW-0963">Cytoplasm</keyword>
<keyword id="KW-0342">GTP-binding</keyword>
<keyword id="KW-0547">Nucleotide-binding</keyword>
<keyword id="KW-1185">Reference proteome</keyword>
<keyword id="KW-0717">Septation</keyword>
<dbReference type="EMBL" id="U29400">
    <property type="protein sequence ID" value="AAC24467.1"/>
    <property type="molecule type" value="Genomic_DNA"/>
</dbReference>
<dbReference type="EMBL" id="AE015451">
    <property type="protein sequence ID" value="AAN66965.1"/>
    <property type="molecule type" value="Genomic_DNA"/>
</dbReference>
<dbReference type="PIR" id="T10476">
    <property type="entry name" value="T10476"/>
</dbReference>
<dbReference type="RefSeq" id="NP_743501.1">
    <property type="nucleotide sequence ID" value="NC_002947.4"/>
</dbReference>
<dbReference type="RefSeq" id="WP_003251871.1">
    <property type="nucleotide sequence ID" value="NZ_CP169744.1"/>
</dbReference>
<dbReference type="SMR" id="Q59692"/>
<dbReference type="STRING" id="160488.PP_1342"/>
<dbReference type="PaxDb" id="160488-PP_1342"/>
<dbReference type="GeneID" id="83682224"/>
<dbReference type="KEGG" id="ppu:PP_1342"/>
<dbReference type="PATRIC" id="fig|160488.4.peg.1421"/>
<dbReference type="eggNOG" id="COG0206">
    <property type="taxonomic scope" value="Bacteria"/>
</dbReference>
<dbReference type="HOGENOM" id="CLU_024865_0_2_6"/>
<dbReference type="OrthoDB" id="9813375at2"/>
<dbReference type="PhylomeDB" id="Q59692"/>
<dbReference type="BioCyc" id="PPUT160488:G1G01-1429-MONOMER"/>
<dbReference type="Proteomes" id="UP000000556">
    <property type="component" value="Chromosome"/>
</dbReference>
<dbReference type="GO" id="GO:0032153">
    <property type="term" value="C:cell division site"/>
    <property type="evidence" value="ECO:0007669"/>
    <property type="project" value="UniProtKB-UniRule"/>
</dbReference>
<dbReference type="GO" id="GO:0005737">
    <property type="term" value="C:cytoplasm"/>
    <property type="evidence" value="ECO:0007669"/>
    <property type="project" value="UniProtKB-SubCell"/>
</dbReference>
<dbReference type="GO" id="GO:0005525">
    <property type="term" value="F:GTP binding"/>
    <property type="evidence" value="ECO:0007669"/>
    <property type="project" value="UniProtKB-UniRule"/>
</dbReference>
<dbReference type="GO" id="GO:0003924">
    <property type="term" value="F:GTPase activity"/>
    <property type="evidence" value="ECO:0007669"/>
    <property type="project" value="UniProtKB-UniRule"/>
</dbReference>
<dbReference type="GO" id="GO:0000917">
    <property type="term" value="P:division septum assembly"/>
    <property type="evidence" value="ECO:0007669"/>
    <property type="project" value="UniProtKB-KW"/>
</dbReference>
<dbReference type="GO" id="GO:0043093">
    <property type="term" value="P:FtsZ-dependent cytokinesis"/>
    <property type="evidence" value="ECO:0007669"/>
    <property type="project" value="UniProtKB-UniRule"/>
</dbReference>
<dbReference type="GO" id="GO:0051258">
    <property type="term" value="P:protein polymerization"/>
    <property type="evidence" value="ECO:0007669"/>
    <property type="project" value="UniProtKB-UniRule"/>
</dbReference>
<dbReference type="CDD" id="cd02201">
    <property type="entry name" value="FtsZ_type1"/>
    <property type="match status" value="1"/>
</dbReference>
<dbReference type="FunFam" id="3.40.50.1440:FF:000023">
    <property type="entry name" value="Cell division protein FtsZ"/>
    <property type="match status" value="1"/>
</dbReference>
<dbReference type="Gene3D" id="3.30.1330.20">
    <property type="entry name" value="Tubulin/FtsZ, C-terminal domain"/>
    <property type="match status" value="1"/>
</dbReference>
<dbReference type="Gene3D" id="3.40.50.1440">
    <property type="entry name" value="Tubulin/FtsZ, GTPase domain"/>
    <property type="match status" value="1"/>
</dbReference>
<dbReference type="HAMAP" id="MF_00909">
    <property type="entry name" value="FtsZ"/>
    <property type="match status" value="1"/>
</dbReference>
<dbReference type="InterPro" id="IPR000158">
    <property type="entry name" value="Cell_div_FtsZ"/>
</dbReference>
<dbReference type="InterPro" id="IPR020805">
    <property type="entry name" value="Cell_div_FtsZ_CS"/>
</dbReference>
<dbReference type="InterPro" id="IPR045061">
    <property type="entry name" value="FtsZ/CetZ"/>
</dbReference>
<dbReference type="InterPro" id="IPR024757">
    <property type="entry name" value="FtsZ_C"/>
</dbReference>
<dbReference type="InterPro" id="IPR008280">
    <property type="entry name" value="Tub_FtsZ_C"/>
</dbReference>
<dbReference type="InterPro" id="IPR037103">
    <property type="entry name" value="Tubulin/FtsZ-like_C"/>
</dbReference>
<dbReference type="InterPro" id="IPR018316">
    <property type="entry name" value="Tubulin/FtsZ_2-layer-sand-dom"/>
</dbReference>
<dbReference type="InterPro" id="IPR036525">
    <property type="entry name" value="Tubulin/FtsZ_GTPase_sf"/>
</dbReference>
<dbReference type="InterPro" id="IPR003008">
    <property type="entry name" value="Tubulin_FtsZ_GTPase"/>
</dbReference>
<dbReference type="NCBIfam" id="TIGR00065">
    <property type="entry name" value="ftsZ"/>
    <property type="match status" value="1"/>
</dbReference>
<dbReference type="PANTHER" id="PTHR30314">
    <property type="entry name" value="CELL DIVISION PROTEIN FTSZ-RELATED"/>
    <property type="match status" value="1"/>
</dbReference>
<dbReference type="PANTHER" id="PTHR30314:SF3">
    <property type="entry name" value="MITOCHONDRIAL DIVISION PROTEIN FSZA"/>
    <property type="match status" value="1"/>
</dbReference>
<dbReference type="Pfam" id="PF12327">
    <property type="entry name" value="FtsZ_C"/>
    <property type="match status" value="1"/>
</dbReference>
<dbReference type="Pfam" id="PF00091">
    <property type="entry name" value="Tubulin"/>
    <property type="match status" value="1"/>
</dbReference>
<dbReference type="PRINTS" id="PR00423">
    <property type="entry name" value="CELLDVISFTSZ"/>
</dbReference>
<dbReference type="SMART" id="SM00864">
    <property type="entry name" value="Tubulin"/>
    <property type="match status" value="1"/>
</dbReference>
<dbReference type="SMART" id="SM00865">
    <property type="entry name" value="Tubulin_C"/>
    <property type="match status" value="1"/>
</dbReference>
<dbReference type="SUPFAM" id="SSF55307">
    <property type="entry name" value="Tubulin C-terminal domain-like"/>
    <property type="match status" value="1"/>
</dbReference>
<dbReference type="SUPFAM" id="SSF52490">
    <property type="entry name" value="Tubulin nucleotide-binding domain-like"/>
    <property type="match status" value="1"/>
</dbReference>
<dbReference type="PROSITE" id="PS01134">
    <property type="entry name" value="FTSZ_1"/>
    <property type="match status" value="1"/>
</dbReference>
<dbReference type="PROSITE" id="PS01135">
    <property type="entry name" value="FTSZ_2"/>
    <property type="match status" value="1"/>
</dbReference>
<accession>Q59692</accession>
<reference key="1">
    <citation type="submission" date="1998-06" db="EMBL/GenBank/DDBJ databases">
        <authorList>
            <person name="Yim L."/>
            <person name="Vicente M."/>
        </authorList>
    </citation>
    <scope>NUCLEOTIDE SEQUENCE [GENOMIC DNA]</scope>
</reference>
<reference key="2">
    <citation type="journal article" date="2002" name="Environ. Microbiol.">
        <title>Complete genome sequence and comparative analysis of the metabolically versatile Pseudomonas putida KT2440.</title>
        <authorList>
            <person name="Nelson K.E."/>
            <person name="Weinel C."/>
            <person name="Paulsen I.T."/>
            <person name="Dodson R.J."/>
            <person name="Hilbert H."/>
            <person name="Martins dos Santos V.A.P."/>
            <person name="Fouts D.E."/>
            <person name="Gill S.R."/>
            <person name="Pop M."/>
            <person name="Holmes M."/>
            <person name="Brinkac L.M."/>
            <person name="Beanan M.J."/>
            <person name="DeBoy R.T."/>
            <person name="Daugherty S.C."/>
            <person name="Kolonay J.F."/>
            <person name="Madupu R."/>
            <person name="Nelson W.C."/>
            <person name="White O."/>
            <person name="Peterson J.D."/>
            <person name="Khouri H.M."/>
            <person name="Hance I."/>
            <person name="Chris Lee P."/>
            <person name="Holtzapple E.K."/>
            <person name="Scanlan D."/>
            <person name="Tran K."/>
            <person name="Moazzez A."/>
            <person name="Utterback T.R."/>
            <person name="Rizzo M."/>
            <person name="Lee K."/>
            <person name="Kosack D."/>
            <person name="Moestl D."/>
            <person name="Wedler H."/>
            <person name="Lauber J."/>
            <person name="Stjepandic D."/>
            <person name="Hoheisel J."/>
            <person name="Straetz M."/>
            <person name="Heim S."/>
            <person name="Kiewitz C."/>
            <person name="Eisen J.A."/>
            <person name="Timmis K.N."/>
            <person name="Duesterhoeft A."/>
            <person name="Tuemmler B."/>
            <person name="Fraser C.M."/>
        </authorList>
    </citation>
    <scope>NUCLEOTIDE SEQUENCE [LARGE SCALE GENOMIC DNA]</scope>
    <source>
        <strain>ATCC 47054 / DSM 6125 / CFBP 8728 / NCIMB 11950 / KT2440</strain>
    </source>
</reference>
<proteinExistence type="inferred from homology"/>